<gene>
    <name evidence="1" type="primary">recR</name>
    <name type="ordered locus">CF0524</name>
</gene>
<feature type="chain" id="PRO_1000001522" description="Recombination protein RecR">
    <location>
        <begin position="1"/>
        <end position="200"/>
    </location>
</feature>
<feature type="domain" description="Toprim" evidence="1">
    <location>
        <begin position="82"/>
        <end position="177"/>
    </location>
</feature>
<feature type="zinc finger region" description="C4-type" evidence="1">
    <location>
        <begin position="58"/>
        <end position="75"/>
    </location>
</feature>
<evidence type="ECO:0000255" key="1">
    <source>
        <dbReference type="HAMAP-Rule" id="MF_00017"/>
    </source>
</evidence>
<proteinExistence type="inferred from homology"/>
<sequence>MLKYPDYLSKLISFLRKLPGIGFKTAEKLAFELLDWEQDQLEALGKAFSELSIARSHCPCCFCLKNFPESQCEFCQNNRDTSTLCIVASPKDIFSLERSQVFKGHYYVLGTLLSPLTGKHIEEERMRLLKQRIEFLNPKEIILALDATLEGDATALFLKQELAYSLASISRLALGLPIGLSFDYIDSGTLARAFSGRNPY</sequence>
<dbReference type="EMBL" id="AP006861">
    <property type="protein sequence ID" value="BAE81296.1"/>
    <property type="molecule type" value="Genomic_DNA"/>
</dbReference>
<dbReference type="RefSeq" id="WP_011458076.1">
    <property type="nucleotide sequence ID" value="NC_007899.1"/>
</dbReference>
<dbReference type="SMR" id="Q254J2"/>
<dbReference type="STRING" id="264202.CF0524"/>
<dbReference type="KEGG" id="cfe:CF0524"/>
<dbReference type="eggNOG" id="COG0353">
    <property type="taxonomic scope" value="Bacteria"/>
</dbReference>
<dbReference type="HOGENOM" id="CLU_060739_1_1_0"/>
<dbReference type="OrthoDB" id="9802672at2"/>
<dbReference type="Proteomes" id="UP000001260">
    <property type="component" value="Chromosome"/>
</dbReference>
<dbReference type="GO" id="GO:0003677">
    <property type="term" value="F:DNA binding"/>
    <property type="evidence" value="ECO:0007669"/>
    <property type="project" value="UniProtKB-UniRule"/>
</dbReference>
<dbReference type="GO" id="GO:0008270">
    <property type="term" value="F:zinc ion binding"/>
    <property type="evidence" value="ECO:0007669"/>
    <property type="project" value="UniProtKB-KW"/>
</dbReference>
<dbReference type="GO" id="GO:0006310">
    <property type="term" value="P:DNA recombination"/>
    <property type="evidence" value="ECO:0007669"/>
    <property type="project" value="UniProtKB-UniRule"/>
</dbReference>
<dbReference type="GO" id="GO:0006281">
    <property type="term" value="P:DNA repair"/>
    <property type="evidence" value="ECO:0007669"/>
    <property type="project" value="UniProtKB-UniRule"/>
</dbReference>
<dbReference type="CDD" id="cd01025">
    <property type="entry name" value="TOPRIM_recR"/>
    <property type="match status" value="1"/>
</dbReference>
<dbReference type="Gene3D" id="3.40.1360.10">
    <property type="match status" value="1"/>
</dbReference>
<dbReference type="Gene3D" id="6.10.250.240">
    <property type="match status" value="1"/>
</dbReference>
<dbReference type="Gene3D" id="1.10.8.420">
    <property type="entry name" value="RecR Domain 1"/>
    <property type="match status" value="1"/>
</dbReference>
<dbReference type="HAMAP" id="MF_00017">
    <property type="entry name" value="RecR"/>
    <property type="match status" value="1"/>
</dbReference>
<dbReference type="InterPro" id="IPR000093">
    <property type="entry name" value="DNA_Rcmb_RecR"/>
</dbReference>
<dbReference type="InterPro" id="IPR023627">
    <property type="entry name" value="Rcmb_RecR"/>
</dbReference>
<dbReference type="InterPro" id="IPR006171">
    <property type="entry name" value="TOPRIM_dom"/>
</dbReference>
<dbReference type="InterPro" id="IPR034137">
    <property type="entry name" value="TOPRIM_RecR"/>
</dbReference>
<dbReference type="NCBIfam" id="TIGR00615">
    <property type="entry name" value="recR"/>
    <property type="match status" value="1"/>
</dbReference>
<dbReference type="PANTHER" id="PTHR30446">
    <property type="entry name" value="RECOMBINATION PROTEIN RECR"/>
    <property type="match status" value="1"/>
</dbReference>
<dbReference type="PANTHER" id="PTHR30446:SF0">
    <property type="entry name" value="RECOMBINATION PROTEIN RECR"/>
    <property type="match status" value="1"/>
</dbReference>
<dbReference type="Pfam" id="PF21175">
    <property type="entry name" value="RecR_C"/>
    <property type="match status" value="1"/>
</dbReference>
<dbReference type="Pfam" id="PF21176">
    <property type="entry name" value="RecR_HhH"/>
    <property type="match status" value="1"/>
</dbReference>
<dbReference type="Pfam" id="PF13662">
    <property type="entry name" value="Toprim_4"/>
    <property type="match status" value="1"/>
</dbReference>
<dbReference type="SMART" id="SM00493">
    <property type="entry name" value="TOPRIM"/>
    <property type="match status" value="1"/>
</dbReference>
<dbReference type="SUPFAM" id="SSF111304">
    <property type="entry name" value="Recombination protein RecR"/>
    <property type="match status" value="1"/>
</dbReference>
<dbReference type="PROSITE" id="PS50880">
    <property type="entry name" value="TOPRIM"/>
    <property type="match status" value="1"/>
</dbReference>
<comment type="function">
    <text evidence="1">May play a role in DNA repair. It seems to be involved in an RecBC-independent recombinational process of DNA repair. It may act with RecF and RecO.</text>
</comment>
<comment type="similarity">
    <text evidence="1">Belongs to the RecR family.</text>
</comment>
<organism>
    <name type="scientific">Chlamydia felis (strain Fe/C-56)</name>
    <name type="common">Chlamydophila felis</name>
    <dbReference type="NCBI Taxonomy" id="264202"/>
    <lineage>
        <taxon>Bacteria</taxon>
        <taxon>Pseudomonadati</taxon>
        <taxon>Chlamydiota</taxon>
        <taxon>Chlamydiia</taxon>
        <taxon>Chlamydiales</taxon>
        <taxon>Chlamydiaceae</taxon>
        <taxon>Chlamydia/Chlamydophila group</taxon>
        <taxon>Chlamydia</taxon>
    </lineage>
</organism>
<reference key="1">
    <citation type="journal article" date="2006" name="DNA Res.">
        <title>Genome sequence of the cat pathogen, Chlamydophila felis.</title>
        <authorList>
            <person name="Azuma Y."/>
            <person name="Hirakawa H."/>
            <person name="Yamashita A."/>
            <person name="Cai Y."/>
            <person name="Rahman M.A."/>
            <person name="Suzuki H."/>
            <person name="Mitaku S."/>
            <person name="Toh H."/>
            <person name="Goto S."/>
            <person name="Murakami T."/>
            <person name="Sugi K."/>
            <person name="Hayashi H."/>
            <person name="Fukushi H."/>
            <person name="Hattori M."/>
            <person name="Kuhara S."/>
            <person name="Shirai M."/>
        </authorList>
    </citation>
    <scope>NUCLEOTIDE SEQUENCE [LARGE SCALE GENOMIC DNA]</scope>
    <source>
        <strain>Fe/C-56</strain>
    </source>
</reference>
<name>RECR_CHLFF</name>
<accession>Q254J2</accession>
<keyword id="KW-0227">DNA damage</keyword>
<keyword id="KW-0233">DNA recombination</keyword>
<keyword id="KW-0234">DNA repair</keyword>
<keyword id="KW-0479">Metal-binding</keyword>
<keyword id="KW-0862">Zinc</keyword>
<keyword id="KW-0863">Zinc-finger</keyword>
<protein>
    <recommendedName>
        <fullName evidence="1">Recombination protein RecR</fullName>
    </recommendedName>
</protein>